<organism>
    <name type="scientific">Amoebophilus asiaticus (strain 5a2)</name>
    <dbReference type="NCBI Taxonomy" id="452471"/>
    <lineage>
        <taxon>Bacteria</taxon>
        <taxon>Pseudomonadati</taxon>
        <taxon>Bacteroidota</taxon>
        <taxon>Cytophagia</taxon>
        <taxon>Cytophagales</taxon>
        <taxon>Amoebophilaceae</taxon>
        <taxon>Candidatus Amoebophilus</taxon>
    </lineage>
</organism>
<accession>B3ERG3</accession>
<protein>
    <recommendedName>
        <fullName evidence="1">Large ribosomal subunit protein bL9</fullName>
    </recommendedName>
    <alternativeName>
        <fullName evidence="2">50S ribosomal protein L9</fullName>
    </alternativeName>
</protein>
<sequence>MEIILKQDFKGLGYKNEIVKVKPGYARNYLIPQGFALVANETNKKIAQENAKQMAHKMAKRKQDAESIANRLSQLAIKIKAKVGEKGKIFGAITPIQIADALKEQTGYIADRRDISFEKPIKTLGTHKAIIKLHKEVVLTLSFEVIAEE</sequence>
<dbReference type="EMBL" id="CP001102">
    <property type="protein sequence ID" value="ACE05815.1"/>
    <property type="molecule type" value="Genomic_DNA"/>
</dbReference>
<dbReference type="RefSeq" id="WP_012472576.1">
    <property type="nucleotide sequence ID" value="NC_010830.1"/>
</dbReference>
<dbReference type="SMR" id="B3ERG3"/>
<dbReference type="STRING" id="452471.Aasi_0397"/>
<dbReference type="KEGG" id="aas:Aasi_0397"/>
<dbReference type="eggNOG" id="COG0359">
    <property type="taxonomic scope" value="Bacteria"/>
</dbReference>
<dbReference type="HOGENOM" id="CLU_078938_3_0_10"/>
<dbReference type="OrthoDB" id="9788336at2"/>
<dbReference type="Proteomes" id="UP000001227">
    <property type="component" value="Chromosome"/>
</dbReference>
<dbReference type="GO" id="GO:1990904">
    <property type="term" value="C:ribonucleoprotein complex"/>
    <property type="evidence" value="ECO:0007669"/>
    <property type="project" value="UniProtKB-KW"/>
</dbReference>
<dbReference type="GO" id="GO:0005840">
    <property type="term" value="C:ribosome"/>
    <property type="evidence" value="ECO:0007669"/>
    <property type="project" value="UniProtKB-KW"/>
</dbReference>
<dbReference type="GO" id="GO:0019843">
    <property type="term" value="F:rRNA binding"/>
    <property type="evidence" value="ECO:0007669"/>
    <property type="project" value="UniProtKB-UniRule"/>
</dbReference>
<dbReference type="GO" id="GO:0003735">
    <property type="term" value="F:structural constituent of ribosome"/>
    <property type="evidence" value="ECO:0007669"/>
    <property type="project" value="InterPro"/>
</dbReference>
<dbReference type="GO" id="GO:0006412">
    <property type="term" value="P:translation"/>
    <property type="evidence" value="ECO:0007669"/>
    <property type="project" value="UniProtKB-UniRule"/>
</dbReference>
<dbReference type="Gene3D" id="3.10.430.100">
    <property type="entry name" value="Ribosomal protein L9, C-terminal domain"/>
    <property type="match status" value="1"/>
</dbReference>
<dbReference type="Gene3D" id="3.40.5.10">
    <property type="entry name" value="Ribosomal protein L9, N-terminal domain"/>
    <property type="match status" value="1"/>
</dbReference>
<dbReference type="HAMAP" id="MF_00503">
    <property type="entry name" value="Ribosomal_bL9"/>
    <property type="match status" value="1"/>
</dbReference>
<dbReference type="InterPro" id="IPR000244">
    <property type="entry name" value="Ribosomal_bL9"/>
</dbReference>
<dbReference type="InterPro" id="IPR009027">
    <property type="entry name" value="Ribosomal_bL9/RNase_H1_N"/>
</dbReference>
<dbReference type="InterPro" id="IPR020594">
    <property type="entry name" value="Ribosomal_bL9_bac/chp"/>
</dbReference>
<dbReference type="InterPro" id="IPR020069">
    <property type="entry name" value="Ribosomal_bL9_C"/>
</dbReference>
<dbReference type="InterPro" id="IPR036791">
    <property type="entry name" value="Ribosomal_bL9_C_sf"/>
</dbReference>
<dbReference type="InterPro" id="IPR020070">
    <property type="entry name" value="Ribosomal_bL9_N"/>
</dbReference>
<dbReference type="InterPro" id="IPR036935">
    <property type="entry name" value="Ribosomal_bL9_N_sf"/>
</dbReference>
<dbReference type="NCBIfam" id="TIGR00158">
    <property type="entry name" value="L9"/>
    <property type="match status" value="1"/>
</dbReference>
<dbReference type="PANTHER" id="PTHR21368">
    <property type="entry name" value="50S RIBOSOMAL PROTEIN L9"/>
    <property type="match status" value="1"/>
</dbReference>
<dbReference type="Pfam" id="PF03948">
    <property type="entry name" value="Ribosomal_L9_C"/>
    <property type="match status" value="1"/>
</dbReference>
<dbReference type="Pfam" id="PF01281">
    <property type="entry name" value="Ribosomal_L9_N"/>
    <property type="match status" value="1"/>
</dbReference>
<dbReference type="SUPFAM" id="SSF55658">
    <property type="entry name" value="L9 N-domain-like"/>
    <property type="match status" value="1"/>
</dbReference>
<dbReference type="SUPFAM" id="SSF55653">
    <property type="entry name" value="Ribosomal protein L9 C-domain"/>
    <property type="match status" value="1"/>
</dbReference>
<dbReference type="PROSITE" id="PS00651">
    <property type="entry name" value="RIBOSOMAL_L9"/>
    <property type="match status" value="1"/>
</dbReference>
<keyword id="KW-1185">Reference proteome</keyword>
<keyword id="KW-0687">Ribonucleoprotein</keyword>
<keyword id="KW-0689">Ribosomal protein</keyword>
<keyword id="KW-0694">RNA-binding</keyword>
<keyword id="KW-0699">rRNA-binding</keyword>
<evidence type="ECO:0000255" key="1">
    <source>
        <dbReference type="HAMAP-Rule" id="MF_00503"/>
    </source>
</evidence>
<evidence type="ECO:0000305" key="2"/>
<feature type="chain" id="PRO_1000126860" description="Large ribosomal subunit protein bL9">
    <location>
        <begin position="1"/>
        <end position="149"/>
    </location>
</feature>
<gene>
    <name evidence="1" type="primary">rplI</name>
    <name type="ordered locus">Aasi_0397</name>
</gene>
<reference key="1">
    <citation type="journal article" date="2010" name="J. Bacteriol.">
        <title>The genome of the amoeba symbiont 'Candidatus Amoebophilus asiaticus' reveals common mechanisms for host cell interaction among amoeba-associated bacteria.</title>
        <authorList>
            <person name="Schmitz-Esser S."/>
            <person name="Tischler P."/>
            <person name="Arnold R."/>
            <person name="Montanaro J."/>
            <person name="Wagner M."/>
            <person name="Rattei T."/>
            <person name="Horn M."/>
        </authorList>
    </citation>
    <scope>NUCLEOTIDE SEQUENCE [LARGE SCALE GENOMIC DNA]</scope>
    <source>
        <strain>5a2</strain>
    </source>
</reference>
<proteinExistence type="inferred from homology"/>
<name>RL9_AMOA5</name>
<comment type="function">
    <text evidence="1">Binds to the 23S rRNA.</text>
</comment>
<comment type="similarity">
    <text evidence="1">Belongs to the bacterial ribosomal protein bL9 family.</text>
</comment>